<dbReference type="EC" id="4.3.1.3" evidence="1"/>
<dbReference type="EMBL" id="AM933173">
    <property type="protein sequence ID" value="CAR36665.1"/>
    <property type="molecule type" value="Genomic_DNA"/>
</dbReference>
<dbReference type="RefSeq" id="WP_001095240.1">
    <property type="nucleotide sequence ID" value="NC_011274.1"/>
</dbReference>
<dbReference type="SMR" id="B5R758"/>
<dbReference type="KEGG" id="seg:SG0769"/>
<dbReference type="HOGENOM" id="CLU_014801_4_0_6"/>
<dbReference type="UniPathway" id="UPA00379">
    <property type="reaction ID" value="UER00549"/>
</dbReference>
<dbReference type="Proteomes" id="UP000008321">
    <property type="component" value="Chromosome"/>
</dbReference>
<dbReference type="GO" id="GO:0005737">
    <property type="term" value="C:cytoplasm"/>
    <property type="evidence" value="ECO:0007669"/>
    <property type="project" value="UniProtKB-SubCell"/>
</dbReference>
<dbReference type="GO" id="GO:0004397">
    <property type="term" value="F:histidine ammonia-lyase activity"/>
    <property type="evidence" value="ECO:0007669"/>
    <property type="project" value="UniProtKB-UniRule"/>
</dbReference>
<dbReference type="GO" id="GO:0019556">
    <property type="term" value="P:L-histidine catabolic process to glutamate and formamide"/>
    <property type="evidence" value="ECO:0007669"/>
    <property type="project" value="UniProtKB-UniPathway"/>
</dbReference>
<dbReference type="GO" id="GO:0019557">
    <property type="term" value="P:L-histidine catabolic process to glutamate and formate"/>
    <property type="evidence" value="ECO:0007669"/>
    <property type="project" value="UniProtKB-UniPathway"/>
</dbReference>
<dbReference type="CDD" id="cd00332">
    <property type="entry name" value="PAL-HAL"/>
    <property type="match status" value="1"/>
</dbReference>
<dbReference type="FunFam" id="1.10.275.10:FF:000005">
    <property type="entry name" value="Histidine ammonia-lyase"/>
    <property type="match status" value="1"/>
</dbReference>
<dbReference type="FunFam" id="1.20.200.10:FF:000003">
    <property type="entry name" value="Histidine ammonia-lyase"/>
    <property type="match status" value="1"/>
</dbReference>
<dbReference type="Gene3D" id="1.20.200.10">
    <property type="entry name" value="Fumarase/aspartase (Central domain)"/>
    <property type="match status" value="1"/>
</dbReference>
<dbReference type="Gene3D" id="1.10.275.10">
    <property type="entry name" value="Fumarase/aspartase (N-terminal domain)"/>
    <property type="match status" value="1"/>
</dbReference>
<dbReference type="HAMAP" id="MF_00229">
    <property type="entry name" value="His_ammonia_lyase"/>
    <property type="match status" value="1"/>
</dbReference>
<dbReference type="InterPro" id="IPR001106">
    <property type="entry name" value="Aromatic_Lyase"/>
</dbReference>
<dbReference type="InterPro" id="IPR024083">
    <property type="entry name" value="Fumarase/histidase_N"/>
</dbReference>
<dbReference type="InterPro" id="IPR005921">
    <property type="entry name" value="HutH"/>
</dbReference>
<dbReference type="InterPro" id="IPR008948">
    <property type="entry name" value="L-Aspartase-like"/>
</dbReference>
<dbReference type="InterPro" id="IPR022313">
    <property type="entry name" value="Phe/His_NH3-lyase_AS"/>
</dbReference>
<dbReference type="NCBIfam" id="TIGR01225">
    <property type="entry name" value="hutH"/>
    <property type="match status" value="1"/>
</dbReference>
<dbReference type="NCBIfam" id="NF006871">
    <property type="entry name" value="PRK09367.1"/>
    <property type="match status" value="1"/>
</dbReference>
<dbReference type="PANTHER" id="PTHR10362">
    <property type="entry name" value="HISTIDINE AMMONIA-LYASE"/>
    <property type="match status" value="1"/>
</dbReference>
<dbReference type="Pfam" id="PF00221">
    <property type="entry name" value="Lyase_aromatic"/>
    <property type="match status" value="1"/>
</dbReference>
<dbReference type="SUPFAM" id="SSF48557">
    <property type="entry name" value="L-aspartase-like"/>
    <property type="match status" value="1"/>
</dbReference>
<dbReference type="PROSITE" id="PS00488">
    <property type="entry name" value="PAL_HISTIDASE"/>
    <property type="match status" value="1"/>
</dbReference>
<comment type="catalytic activity">
    <reaction evidence="1">
        <text>L-histidine = trans-urocanate + NH4(+)</text>
        <dbReference type="Rhea" id="RHEA:21232"/>
        <dbReference type="ChEBI" id="CHEBI:17771"/>
        <dbReference type="ChEBI" id="CHEBI:28938"/>
        <dbReference type="ChEBI" id="CHEBI:57595"/>
        <dbReference type="EC" id="4.3.1.3"/>
    </reaction>
</comment>
<comment type="pathway">
    <text evidence="1">Amino-acid degradation; L-histidine degradation into L-glutamate; N-formimidoyl-L-glutamate from L-histidine: step 1/3.</text>
</comment>
<comment type="subcellular location">
    <subcellularLocation>
        <location evidence="1">Cytoplasm</location>
    </subcellularLocation>
</comment>
<comment type="PTM">
    <text evidence="1">Contains an active site 4-methylidene-imidazol-5-one (MIO), which is formed autocatalytically by cyclization and dehydration of residues Ala-Ser-Gly.</text>
</comment>
<comment type="similarity">
    <text evidence="1">Belongs to the PAL/histidase family.</text>
</comment>
<evidence type="ECO:0000255" key="1">
    <source>
        <dbReference type="HAMAP-Rule" id="MF_00229"/>
    </source>
</evidence>
<keyword id="KW-0963">Cytoplasm</keyword>
<keyword id="KW-0369">Histidine metabolism</keyword>
<keyword id="KW-0456">Lyase</keyword>
<accession>B5R758</accession>
<gene>
    <name evidence="1" type="primary">hutH</name>
    <name type="ordered locus">SG0769</name>
</gene>
<protein>
    <recommendedName>
        <fullName evidence="1">Histidine ammonia-lyase</fullName>
        <shortName evidence="1">Histidase</shortName>
        <ecNumber evidence="1">4.3.1.3</ecNumber>
    </recommendedName>
</protein>
<proteinExistence type="inferred from homology"/>
<reference key="1">
    <citation type="journal article" date="2008" name="Genome Res.">
        <title>Comparative genome analysis of Salmonella enteritidis PT4 and Salmonella gallinarum 287/91 provides insights into evolutionary and host adaptation pathways.</title>
        <authorList>
            <person name="Thomson N.R."/>
            <person name="Clayton D.J."/>
            <person name="Windhorst D."/>
            <person name="Vernikos G."/>
            <person name="Davidson S."/>
            <person name="Churcher C."/>
            <person name="Quail M.A."/>
            <person name="Stevens M."/>
            <person name="Jones M.A."/>
            <person name="Watson M."/>
            <person name="Barron A."/>
            <person name="Layton A."/>
            <person name="Pickard D."/>
            <person name="Kingsley R.A."/>
            <person name="Bignell A."/>
            <person name="Clark L."/>
            <person name="Harris B."/>
            <person name="Ormond D."/>
            <person name="Abdellah Z."/>
            <person name="Brooks K."/>
            <person name="Cherevach I."/>
            <person name="Chillingworth T."/>
            <person name="Woodward J."/>
            <person name="Norberczak H."/>
            <person name="Lord A."/>
            <person name="Arrowsmith C."/>
            <person name="Jagels K."/>
            <person name="Moule S."/>
            <person name="Mungall K."/>
            <person name="Saunders M."/>
            <person name="Whitehead S."/>
            <person name="Chabalgoity J.A."/>
            <person name="Maskell D."/>
            <person name="Humphreys T."/>
            <person name="Roberts M."/>
            <person name="Barrow P.A."/>
            <person name="Dougan G."/>
            <person name="Parkhill J."/>
        </authorList>
    </citation>
    <scope>NUCLEOTIDE SEQUENCE [LARGE SCALE GENOMIC DNA]</scope>
    <source>
        <strain>287/91 / NCTC 13346</strain>
    </source>
</reference>
<organism>
    <name type="scientific">Salmonella gallinarum (strain 287/91 / NCTC 13346)</name>
    <dbReference type="NCBI Taxonomy" id="550538"/>
    <lineage>
        <taxon>Bacteria</taxon>
        <taxon>Pseudomonadati</taxon>
        <taxon>Pseudomonadota</taxon>
        <taxon>Gammaproteobacteria</taxon>
        <taxon>Enterobacterales</taxon>
        <taxon>Enterobacteriaceae</taxon>
        <taxon>Salmonella</taxon>
    </lineage>
</organism>
<feature type="chain" id="PRO_1000100449" description="Histidine ammonia-lyase">
    <location>
        <begin position="1"/>
        <end position="506"/>
    </location>
</feature>
<feature type="modified residue" description="2,3-didehydroalanine (Ser)" evidence="1">
    <location>
        <position position="144"/>
    </location>
</feature>
<feature type="cross-link" description="5-imidazolinone (Ala-Gly)" evidence="1">
    <location>
        <begin position="143"/>
        <end position="145"/>
    </location>
</feature>
<name>HUTH_SALG2</name>
<sequence>MNTMTLTPGQLSLSQLYDVWRHPVQLRLDASAIDGINASVACVNDIVAEGRTAYGINTGFGLLAQTRIADEDLQNLQRSLVLSHAAGVGDPLDDAMVRLIMVLKINSLARGFSGIRLSVIEALIALVNAGVYPLIPAKGSVGASGDLAPLAHLSLTLLGEGKARWQGEWLPAQTALKKAGLEPVALAAKEGLALLNGTQASTAFALRGLFEAQELFASAVVCGALTTEAVLGSRRPFDARIHAARGQQGQIDVARLFRHLLTDTSAIAESHHHCHKVQDPYSLRCQPQVMGACLTQLRQTKEVLLAEANAVSDNPLVFADAGEVISGGNFHAEPVAMAADNLALAIAEIGALSERRIALMMDKHMSQLPPFLVKNGGVNSGFMIAQVTAAALASENKALAHPHSVDSLPTSANQEDHVSMAPAAGRLLWEMAANTRGIIAVEWLAACQGIDLREGLTSSPLLEQARQTLREQVAHYTQDRFFAPDIECATALLAQGALQRLVPDFM</sequence>